<protein>
    <recommendedName>
        <fullName evidence="1">Ribosomal protein L11 methyltransferase</fullName>
        <shortName evidence="1">L11 Mtase</shortName>
        <ecNumber evidence="1">2.1.1.-</ecNumber>
    </recommendedName>
</protein>
<gene>
    <name evidence="1" type="primary">prmA</name>
    <name type="ordered locus">RHE_CH02828</name>
</gene>
<comment type="function">
    <text evidence="1">Methylates ribosomal protein L11.</text>
</comment>
<comment type="catalytic activity">
    <reaction evidence="1">
        <text>L-lysyl-[protein] + 3 S-adenosyl-L-methionine = N(6),N(6),N(6)-trimethyl-L-lysyl-[protein] + 3 S-adenosyl-L-homocysteine + 3 H(+)</text>
        <dbReference type="Rhea" id="RHEA:54192"/>
        <dbReference type="Rhea" id="RHEA-COMP:9752"/>
        <dbReference type="Rhea" id="RHEA-COMP:13826"/>
        <dbReference type="ChEBI" id="CHEBI:15378"/>
        <dbReference type="ChEBI" id="CHEBI:29969"/>
        <dbReference type="ChEBI" id="CHEBI:57856"/>
        <dbReference type="ChEBI" id="CHEBI:59789"/>
        <dbReference type="ChEBI" id="CHEBI:61961"/>
    </reaction>
</comment>
<comment type="subcellular location">
    <subcellularLocation>
        <location evidence="1">Cytoplasm</location>
    </subcellularLocation>
</comment>
<comment type="similarity">
    <text evidence="1">Belongs to the methyltransferase superfamily. PrmA family.</text>
</comment>
<sequence>MSEIRLYVSTTESQAEQILDLLTEVFGEEDFAIGTTEVDEKRDIWEASVYMMAEDEAQVRSRVETALKSAFPDAQLLREVIPDVDWVVKSLEGLKPVRAGRFLVHGSHDREKVRPGDIAIEIDAGQAFGTGHHGTTAGCLEVIDRVVRSRRVRNALDLGTGSGVLAIAVRKLKNMPVLATDIDPIATRVAAENVRRNGIASGIVTRTAPGFHSTAFSEHGPFDLIIANILARPLIRMAPQLAAHLAPGGSVILSGILAAQRWKVIAAYSGARLRHVRTIWRNGWVTIHFDRP</sequence>
<feature type="chain" id="PRO_1000046078" description="Ribosomal protein L11 methyltransferase">
    <location>
        <begin position="1"/>
        <end position="292"/>
    </location>
</feature>
<feature type="binding site" evidence="1">
    <location>
        <position position="136"/>
    </location>
    <ligand>
        <name>S-adenosyl-L-methionine</name>
        <dbReference type="ChEBI" id="CHEBI:59789"/>
    </ligand>
</feature>
<feature type="binding site" evidence="1">
    <location>
        <position position="159"/>
    </location>
    <ligand>
        <name>S-adenosyl-L-methionine</name>
        <dbReference type="ChEBI" id="CHEBI:59789"/>
    </ligand>
</feature>
<feature type="binding site" evidence="1">
    <location>
        <position position="181"/>
    </location>
    <ligand>
        <name>S-adenosyl-L-methionine</name>
        <dbReference type="ChEBI" id="CHEBI:59789"/>
    </ligand>
</feature>
<feature type="binding site" evidence="1">
    <location>
        <position position="228"/>
    </location>
    <ligand>
        <name>S-adenosyl-L-methionine</name>
        <dbReference type="ChEBI" id="CHEBI:59789"/>
    </ligand>
</feature>
<proteinExistence type="inferred from homology"/>
<organism>
    <name type="scientific">Rhizobium etli (strain ATCC 51251 / DSM 11541 / JCM 21823 / NBRC 15573 / CFN 42)</name>
    <dbReference type="NCBI Taxonomy" id="347834"/>
    <lineage>
        <taxon>Bacteria</taxon>
        <taxon>Pseudomonadati</taxon>
        <taxon>Pseudomonadota</taxon>
        <taxon>Alphaproteobacteria</taxon>
        <taxon>Hyphomicrobiales</taxon>
        <taxon>Rhizobiaceae</taxon>
        <taxon>Rhizobium/Agrobacterium group</taxon>
        <taxon>Rhizobium</taxon>
    </lineage>
</organism>
<accession>Q2K6E0</accession>
<reference key="1">
    <citation type="journal article" date="2006" name="Proc. Natl. Acad. Sci. U.S.A.">
        <title>The partitioned Rhizobium etli genome: genetic and metabolic redundancy in seven interacting replicons.</title>
        <authorList>
            <person name="Gonzalez V."/>
            <person name="Santamaria R.I."/>
            <person name="Bustos P."/>
            <person name="Hernandez-Gonzalez I."/>
            <person name="Medrano-Soto A."/>
            <person name="Moreno-Hagelsieb G."/>
            <person name="Janga S.C."/>
            <person name="Ramirez M.A."/>
            <person name="Jimenez-Jacinto V."/>
            <person name="Collado-Vides J."/>
            <person name="Davila G."/>
        </authorList>
    </citation>
    <scope>NUCLEOTIDE SEQUENCE [LARGE SCALE GENOMIC DNA]</scope>
    <source>
        <strain>ATCC 51251 / DSM 11541 / JCM 21823 / NBRC 15573 / CFN 42</strain>
    </source>
</reference>
<keyword id="KW-0963">Cytoplasm</keyword>
<keyword id="KW-0489">Methyltransferase</keyword>
<keyword id="KW-1185">Reference proteome</keyword>
<keyword id="KW-0949">S-adenosyl-L-methionine</keyword>
<keyword id="KW-0808">Transferase</keyword>
<dbReference type="EC" id="2.1.1.-" evidence="1"/>
<dbReference type="EMBL" id="CP000133">
    <property type="protein sequence ID" value="ABC91596.1"/>
    <property type="molecule type" value="Genomic_DNA"/>
</dbReference>
<dbReference type="RefSeq" id="WP_011426073.1">
    <property type="nucleotide sequence ID" value="NC_007761.1"/>
</dbReference>
<dbReference type="SMR" id="Q2K6E0"/>
<dbReference type="KEGG" id="ret:RHE_CH02828"/>
<dbReference type="eggNOG" id="COG2264">
    <property type="taxonomic scope" value="Bacteria"/>
</dbReference>
<dbReference type="HOGENOM" id="CLU_049382_3_0_5"/>
<dbReference type="OrthoDB" id="9785995at2"/>
<dbReference type="Proteomes" id="UP000001936">
    <property type="component" value="Chromosome"/>
</dbReference>
<dbReference type="GO" id="GO:0005737">
    <property type="term" value="C:cytoplasm"/>
    <property type="evidence" value="ECO:0007669"/>
    <property type="project" value="UniProtKB-SubCell"/>
</dbReference>
<dbReference type="GO" id="GO:0016279">
    <property type="term" value="F:protein-lysine N-methyltransferase activity"/>
    <property type="evidence" value="ECO:0007669"/>
    <property type="project" value="RHEA"/>
</dbReference>
<dbReference type="GO" id="GO:0032259">
    <property type="term" value="P:methylation"/>
    <property type="evidence" value="ECO:0007669"/>
    <property type="project" value="UniProtKB-KW"/>
</dbReference>
<dbReference type="CDD" id="cd02440">
    <property type="entry name" value="AdoMet_MTases"/>
    <property type="match status" value="1"/>
</dbReference>
<dbReference type="Gene3D" id="3.40.50.150">
    <property type="entry name" value="Vaccinia Virus protein VP39"/>
    <property type="match status" value="1"/>
</dbReference>
<dbReference type="HAMAP" id="MF_00735">
    <property type="entry name" value="Methyltr_PrmA"/>
    <property type="match status" value="1"/>
</dbReference>
<dbReference type="InterPro" id="IPR050078">
    <property type="entry name" value="Ribosomal_L11_MeTrfase_PrmA"/>
</dbReference>
<dbReference type="InterPro" id="IPR004498">
    <property type="entry name" value="Ribosomal_PrmA_MeTrfase"/>
</dbReference>
<dbReference type="InterPro" id="IPR029063">
    <property type="entry name" value="SAM-dependent_MTases_sf"/>
</dbReference>
<dbReference type="NCBIfam" id="NF001784">
    <property type="entry name" value="PRK00517.2-1"/>
    <property type="match status" value="1"/>
</dbReference>
<dbReference type="PANTHER" id="PTHR43648">
    <property type="entry name" value="ELECTRON TRANSFER FLAVOPROTEIN BETA SUBUNIT LYSINE METHYLTRANSFERASE"/>
    <property type="match status" value="1"/>
</dbReference>
<dbReference type="PANTHER" id="PTHR43648:SF1">
    <property type="entry name" value="ELECTRON TRANSFER FLAVOPROTEIN BETA SUBUNIT LYSINE METHYLTRANSFERASE"/>
    <property type="match status" value="1"/>
</dbReference>
<dbReference type="Pfam" id="PF06325">
    <property type="entry name" value="PrmA"/>
    <property type="match status" value="1"/>
</dbReference>
<dbReference type="PIRSF" id="PIRSF000401">
    <property type="entry name" value="RPL11_MTase"/>
    <property type="match status" value="1"/>
</dbReference>
<dbReference type="SUPFAM" id="SSF53335">
    <property type="entry name" value="S-adenosyl-L-methionine-dependent methyltransferases"/>
    <property type="match status" value="1"/>
</dbReference>
<name>PRMA_RHIEC</name>
<evidence type="ECO:0000255" key="1">
    <source>
        <dbReference type="HAMAP-Rule" id="MF_00735"/>
    </source>
</evidence>